<evidence type="ECO:0000250" key="1"/>
<evidence type="ECO:0000250" key="2">
    <source>
        <dbReference type="UniProtKB" id="O18423"/>
    </source>
</evidence>
<evidence type="ECO:0000255" key="3"/>
<evidence type="ECO:0000269" key="4">
    <source>
    </source>
</evidence>
<evidence type="ECO:0000305" key="5"/>
<feature type="chain" id="PRO_0000342607" description="Lysenin-related protein 1">
    <location>
        <begin position="1"/>
        <end position="300"/>
    </location>
</feature>
<feature type="region of interest" description="N-terminal cap domain" evidence="2">
    <location>
        <begin position="12"/>
        <end position="35"/>
    </location>
</feature>
<feature type="region of interest" description="Beta-hairpin domain" evidence="2">
    <location>
        <begin position="36"/>
        <end position="109"/>
    </location>
</feature>
<feature type="region of interest" description="N-terminal cap domain" evidence="2">
    <location>
        <begin position="110"/>
        <end position="158"/>
    </location>
</feature>
<feature type="region of interest" description="C-terminal receptor-binding domain" evidence="2">
    <location>
        <begin position="159"/>
        <end position="299"/>
    </location>
</feature>
<feature type="binding site" evidence="2">
    <location>
        <position position="187"/>
    </location>
    <ligand>
        <name>an N-(acyl)-sphingosylphosphocholine</name>
        <dbReference type="ChEBI" id="CHEBI:64583"/>
    </ligand>
</feature>
<feature type="binding site" evidence="2">
    <location>
        <position position="229"/>
    </location>
    <ligand>
        <name>an N-(acyl)-sphingosylphosphocholine</name>
        <dbReference type="ChEBI" id="CHEBI:64583"/>
    </ligand>
</feature>
<feature type="binding site" evidence="2">
    <location>
        <position position="235"/>
    </location>
    <ligand>
        <name>an N-(acyl)-sphingosylphosphocholine</name>
        <dbReference type="ChEBI" id="CHEBI:64583"/>
    </ligand>
</feature>
<feature type="binding site" evidence="2">
    <location>
        <position position="284"/>
    </location>
    <ligand>
        <name>an N-(acyl)-sphingosylphosphocholine</name>
        <dbReference type="ChEBI" id="CHEBI:64583"/>
    </ligand>
</feature>
<feature type="site" description="Crucial for binding sphingomyelin and inducing hemolysis" evidence="1">
    <location>
        <position position="22"/>
    </location>
</feature>
<feature type="site" description="Crucial for binding sphingomyelin and important for inducing hemolysis" evidence="1">
    <location>
        <position position="189"/>
    </location>
</feature>
<feature type="site" description="Crucial for binding sphingomyelin and inducing hemolysis" evidence="1">
    <location>
        <position position="247"/>
    </location>
</feature>
<feature type="site" description="Crucial for binding sphingomyelin and inducing hemolysis" evidence="1">
    <location>
        <position position="293"/>
    </location>
</feature>
<feature type="disulfide bond" evidence="3">
    <location>
        <begin position="274"/>
        <end position="285"/>
    </location>
</feature>
<feature type="mutagenesis site" description="Important increase in activity." evidence="4">
    <original>I</original>
    <variation>F</variation>
    <location>
        <position position="211"/>
    </location>
</feature>
<reference key="1">
    <citation type="journal article" date="1997" name="Gene">
        <title>Molecular cloning of cDNA for lysenin, a novel protein in the earthworm Eisenia foetida that causes contraction of rat vascular smooth muscle.</title>
        <authorList>
            <person name="Sekizawa Y."/>
            <person name="Kubo T."/>
            <person name="Kobayashi H."/>
            <person name="Nakajima T."/>
            <person name="Natori S."/>
        </authorList>
    </citation>
    <scope>NUCLEOTIDE SEQUENCE [MRNA]</scope>
    <source>
        <tissue>Coelomocyte</tissue>
    </source>
</reference>
<reference key="2">
    <citation type="journal article" date="2004" name="Biochemistry">
        <title>Recognition of sphingomyelin by lysenin and lysenin-related proteins.</title>
        <authorList>
            <person name="Kiyokawa E."/>
            <person name="Makino A."/>
            <person name="Ishii K."/>
            <person name="Otsuka N."/>
            <person name="Yamaji-Hasegawa A."/>
            <person name="Kobayashi T."/>
        </authorList>
    </citation>
    <scope>FUNCTION</scope>
    <scope>MUTAGENESIS OF ILE-211</scope>
</reference>
<sequence length="300" mass="33913">MSSSTVMADGFEEIEVDVVSVWKEGYAYENRGNSSVQQKITMTKGMKNLNSETKTLTATHTLGRTLKVGDPFEIASVEVSYTFSHQKSQVSMTQTEVYSSQVIEHTVTIPPNKKFTRWKLNADVGGTGIEYMYLIDEVTAIGADLTIPEVNKSRAKILVGRQIHLGETEIRIKHAERKEYMTVISRKSWPAATLGNSNLFKFVLFEDSSGIRIKTLNTMYPGYEWAYSSDQGGIYFDESSDNPKQRWALSKAMPLRHGDVVTFRNNFFTNSGMCYDDGPATNVYCLEKREDKWILEVVNT</sequence>
<protein>
    <recommendedName>
        <fullName>Lysenin-related protein 1</fullName>
        <shortName>LRP-1</shortName>
    </recommendedName>
    <alternativeName>
        <fullName>Lysenin-2</fullName>
    </alternativeName>
    <alternativeName>
        <fullName>efL2</fullName>
    </alternativeName>
</protein>
<proteinExistence type="evidence at protein level"/>
<organism>
    <name type="scientific">Eisenia fetida</name>
    <name type="common">Red wiggler worm</name>
    <dbReference type="NCBI Taxonomy" id="6396"/>
    <lineage>
        <taxon>Eukaryota</taxon>
        <taxon>Metazoa</taxon>
        <taxon>Spiralia</taxon>
        <taxon>Lophotrochozoa</taxon>
        <taxon>Annelida</taxon>
        <taxon>Clitellata</taxon>
        <taxon>Oligochaeta</taxon>
        <taxon>Crassiclitellata</taxon>
        <taxon>Lumbricina</taxon>
        <taxon>Lumbricidae</taxon>
        <taxon>Lumbricinae</taxon>
        <taxon>Eisenia</taxon>
    </lineage>
</organism>
<comment type="function">
    <text evidence="4">Pore-forming toxin that specifically binds sphingomyelin in the plasma membrane of various cells. Has hemolytic activity. Binding and hemolytic activities of this toxin are 10 times less than those of lysenin and lysenin-related protein 2.</text>
</comment>
<comment type="subunit">
    <text evidence="2">Binds to sphingomyelin as a monomer by using its C-terminal domain. Forms a nonamer when sphingomyelin/LRP-1 ratio is lower than ca 500. Oligomerization, but not binding, is influenced by the fluidity of sphingomyelin.</text>
</comment>
<comment type="subcellular location">
    <subcellularLocation>
        <location evidence="2">Secreted</location>
    </subcellularLocation>
    <subcellularLocation>
        <location evidence="2">Target cell membrane</location>
    </subcellularLocation>
    <text evidence="2">Forms a beta-barrel pore in the membrane.</text>
</comment>
<comment type="tissue specificity">
    <text>Expressed by coelomocytes.</text>
</comment>
<comment type="similarity">
    <text evidence="5">Belongs to the lysenin family.</text>
</comment>
<accession>O18424</accession>
<keyword id="KW-0044">Antibiotic</keyword>
<keyword id="KW-0929">Antimicrobial</keyword>
<keyword id="KW-0204">Cytolysis</keyword>
<keyword id="KW-1015">Disulfide bond</keyword>
<keyword id="KW-0354">Hemolysis</keyword>
<keyword id="KW-0406">Ion transport</keyword>
<keyword id="KW-0472">Membrane</keyword>
<keyword id="KW-0964">Secreted</keyword>
<keyword id="KW-1052">Target cell membrane</keyword>
<keyword id="KW-1053">Target membrane</keyword>
<keyword id="KW-0800">Toxin</keyword>
<keyword id="KW-0812">Transmembrane</keyword>
<keyword id="KW-0813">Transport</keyword>
<name>TXLR1_EISFE</name>
<dbReference type="EMBL" id="D85847">
    <property type="protein sequence ID" value="BAA21519.1"/>
    <property type="molecule type" value="mRNA"/>
</dbReference>
<dbReference type="SMR" id="O18424"/>
<dbReference type="GO" id="GO:0005576">
    <property type="term" value="C:extracellular region"/>
    <property type="evidence" value="ECO:0007669"/>
    <property type="project" value="UniProtKB-SubCell"/>
</dbReference>
<dbReference type="GO" id="GO:0016020">
    <property type="term" value="C:membrane"/>
    <property type="evidence" value="ECO:0007669"/>
    <property type="project" value="UniProtKB-KW"/>
</dbReference>
<dbReference type="GO" id="GO:0044218">
    <property type="term" value="C:other organism cell membrane"/>
    <property type="evidence" value="ECO:0007669"/>
    <property type="project" value="UniProtKB-KW"/>
</dbReference>
<dbReference type="GO" id="GO:0090729">
    <property type="term" value="F:toxin activity"/>
    <property type="evidence" value="ECO:0007669"/>
    <property type="project" value="UniProtKB-KW"/>
</dbReference>
<dbReference type="GO" id="GO:0042742">
    <property type="term" value="P:defense response to bacterium"/>
    <property type="evidence" value="ECO:0007669"/>
    <property type="project" value="UniProtKB-KW"/>
</dbReference>
<dbReference type="GO" id="GO:0031640">
    <property type="term" value="P:killing of cells of another organism"/>
    <property type="evidence" value="ECO:0007669"/>
    <property type="project" value="UniProtKB-KW"/>
</dbReference>
<dbReference type="GO" id="GO:0006811">
    <property type="term" value="P:monoatomic ion transport"/>
    <property type="evidence" value="ECO:0007669"/>
    <property type="project" value="UniProtKB-KW"/>
</dbReference>
<dbReference type="CDD" id="cd20225">
    <property type="entry name" value="PFM_lysenin-like"/>
    <property type="match status" value="1"/>
</dbReference>
<dbReference type="Gene3D" id="2.60.120.980">
    <property type="match status" value="1"/>
</dbReference>
<dbReference type="Gene3D" id="2.80.10.50">
    <property type="match status" value="1"/>
</dbReference>
<dbReference type="SUPFAM" id="SSF56973">
    <property type="entry name" value="Aerolisin/ETX pore-forming domain"/>
    <property type="match status" value="1"/>
</dbReference>